<protein>
    <recommendedName>
        <fullName evidence="1">Chromosomal replication initiator protein DnaA</fullName>
    </recommendedName>
</protein>
<gene>
    <name evidence="1" type="primary">dnaA</name>
    <name type="ordered locus">CMS0001</name>
</gene>
<sequence length="476" mass="53079">MSDRSDPTHAIWQKVLAALTADDRITPQLHGFISLVEPKGVMTGTLYLEVPNDLTRGMLEQRIRVPLLNAIGSLDEAAGVSNFAIVVNPGIAQDAFAQHPEPAEQPYIETPTITAPTDNPGLPASPSRGDSRLNPKYGFDTFVIGGSNRFAHAAAVAVAEAPAKAYNPLFIYGDSGLGKTHLLHAIGHYAISLYPGIRVRYVSSEEFTNDFINSIANNRSSLFQSRYRDNDILLIDDIQFLQGKDSTQEAFFHTFNTLHDHNKQVVITSDLPPKHLTGFEDRMRSRFEWGLITDVQAPDLETRIAILRKKAQSEKLQVPDDILEYMATKVTSNIRELEGTLIRVTAFASLNKTPVDLALVQTVLKDLITLDEDNVIAPVDIINHTAAYFKLTVDDLYGSSRSQAVATARQIAMYLCRELTNLSLPKIGQLFGNRDHTTVMYANKKITELMKERRSIYNQVTELTSRIKQNHRYGKM</sequence>
<comment type="function">
    <text evidence="1">Plays an essential role in the initiation and regulation of chromosomal replication. ATP-DnaA binds to the origin of replication (oriC) to initiate formation of the DNA replication initiation complex once per cell cycle. Binds the DnaA box (a 9 base pair repeat at the origin) and separates the double-stranded (ds)DNA. Forms a right-handed helical filament on oriC DNA; dsDNA binds to the exterior of the filament while single-stranded (ss)DNA is stabiized in the filament's interior. The ATP-DnaA-oriC complex binds and stabilizes one strand of the AT-rich DNA unwinding element (DUE), permitting loading of DNA polymerase. After initiation quickly degrades to an ADP-DnaA complex that is not apt for DNA replication. Binds acidic phospholipids.</text>
</comment>
<comment type="subunit">
    <text evidence="1">Oligomerizes as a right-handed, spiral filament on DNA at oriC.</text>
</comment>
<comment type="subcellular location">
    <subcellularLocation>
        <location evidence="1">Cytoplasm</location>
    </subcellularLocation>
</comment>
<comment type="domain">
    <text evidence="1">Domain I is involved in oligomerization and binding regulators, domain II is flexibile and of varying length in different bacteria, domain III forms the AAA+ region, while domain IV binds dsDNA.</text>
</comment>
<comment type="similarity">
    <text evidence="1">Belongs to the DnaA family.</text>
</comment>
<feature type="chain" id="PRO_1000079943" description="Chromosomal replication initiator protein DnaA">
    <location>
        <begin position="1"/>
        <end position="476"/>
    </location>
</feature>
<feature type="region of interest" description="Domain I, interacts with DnaA modulators" evidence="1">
    <location>
        <begin position="1"/>
        <end position="87"/>
    </location>
</feature>
<feature type="region of interest" description="Domain II" evidence="1">
    <location>
        <begin position="87"/>
        <end position="131"/>
    </location>
</feature>
<feature type="region of interest" description="Domain III, AAA+ region" evidence="1">
    <location>
        <begin position="132"/>
        <end position="348"/>
    </location>
</feature>
<feature type="region of interest" description="Domain IV, binds dsDNA" evidence="1">
    <location>
        <begin position="349"/>
        <end position="476"/>
    </location>
</feature>
<feature type="binding site" evidence="1">
    <location>
        <position position="176"/>
    </location>
    <ligand>
        <name>ATP</name>
        <dbReference type="ChEBI" id="CHEBI:30616"/>
    </ligand>
</feature>
<feature type="binding site" evidence="1">
    <location>
        <position position="178"/>
    </location>
    <ligand>
        <name>ATP</name>
        <dbReference type="ChEBI" id="CHEBI:30616"/>
    </ligand>
</feature>
<feature type="binding site" evidence="1">
    <location>
        <position position="179"/>
    </location>
    <ligand>
        <name>ATP</name>
        <dbReference type="ChEBI" id="CHEBI:30616"/>
    </ligand>
</feature>
<feature type="binding site" evidence="1">
    <location>
        <position position="180"/>
    </location>
    <ligand>
        <name>ATP</name>
        <dbReference type="ChEBI" id="CHEBI:30616"/>
    </ligand>
</feature>
<reference key="1">
    <citation type="journal article" date="2008" name="J. Bacteriol.">
        <title>Genome of the actinomycete plant pathogen Clavibacter michiganensis subsp. sepedonicus suggests recent niche adaptation.</title>
        <authorList>
            <person name="Bentley S.D."/>
            <person name="Corton C."/>
            <person name="Brown S.E."/>
            <person name="Barron A."/>
            <person name="Clark L."/>
            <person name="Doggett J."/>
            <person name="Harris B."/>
            <person name="Ormond D."/>
            <person name="Quail M.A."/>
            <person name="May G."/>
            <person name="Francis D."/>
            <person name="Knudson D."/>
            <person name="Parkhill J."/>
            <person name="Ishimaru C.A."/>
        </authorList>
    </citation>
    <scope>NUCLEOTIDE SEQUENCE [LARGE SCALE GENOMIC DNA]</scope>
    <source>
        <strain>ATCC 33113 / DSM 20744 / JCM 9667 / LMG 2889 / ICMP 2535 / C-1</strain>
    </source>
</reference>
<organism>
    <name type="scientific">Clavibacter sepedonicus</name>
    <name type="common">Clavibacter michiganensis subsp. sepedonicus</name>
    <dbReference type="NCBI Taxonomy" id="31964"/>
    <lineage>
        <taxon>Bacteria</taxon>
        <taxon>Bacillati</taxon>
        <taxon>Actinomycetota</taxon>
        <taxon>Actinomycetes</taxon>
        <taxon>Micrococcales</taxon>
        <taxon>Microbacteriaceae</taxon>
        <taxon>Clavibacter</taxon>
    </lineage>
</organism>
<evidence type="ECO:0000255" key="1">
    <source>
        <dbReference type="HAMAP-Rule" id="MF_00377"/>
    </source>
</evidence>
<name>DNAA_CLASE</name>
<proteinExistence type="inferred from homology"/>
<keyword id="KW-0067">ATP-binding</keyword>
<keyword id="KW-0963">Cytoplasm</keyword>
<keyword id="KW-0235">DNA replication</keyword>
<keyword id="KW-0238">DNA-binding</keyword>
<keyword id="KW-0446">Lipid-binding</keyword>
<keyword id="KW-0547">Nucleotide-binding</keyword>
<dbReference type="EMBL" id="AM849034">
    <property type="protein sequence ID" value="CAQ00127.1"/>
    <property type="molecule type" value="Genomic_DNA"/>
</dbReference>
<dbReference type="RefSeq" id="WP_012297496.1">
    <property type="nucleotide sequence ID" value="NZ_MZMN01000003.1"/>
</dbReference>
<dbReference type="SMR" id="B0RH69"/>
<dbReference type="STRING" id="31964.CMS0001"/>
<dbReference type="KEGG" id="cms:CMS0001"/>
<dbReference type="eggNOG" id="COG0593">
    <property type="taxonomic scope" value="Bacteria"/>
</dbReference>
<dbReference type="HOGENOM" id="CLU_026910_2_0_11"/>
<dbReference type="OrthoDB" id="9807019at2"/>
<dbReference type="Proteomes" id="UP000001318">
    <property type="component" value="Chromosome"/>
</dbReference>
<dbReference type="GO" id="GO:0005737">
    <property type="term" value="C:cytoplasm"/>
    <property type="evidence" value="ECO:0007669"/>
    <property type="project" value="UniProtKB-SubCell"/>
</dbReference>
<dbReference type="GO" id="GO:0005886">
    <property type="term" value="C:plasma membrane"/>
    <property type="evidence" value="ECO:0007669"/>
    <property type="project" value="TreeGrafter"/>
</dbReference>
<dbReference type="GO" id="GO:0005524">
    <property type="term" value="F:ATP binding"/>
    <property type="evidence" value="ECO:0007669"/>
    <property type="project" value="UniProtKB-UniRule"/>
</dbReference>
<dbReference type="GO" id="GO:0016887">
    <property type="term" value="F:ATP hydrolysis activity"/>
    <property type="evidence" value="ECO:0007669"/>
    <property type="project" value="InterPro"/>
</dbReference>
<dbReference type="GO" id="GO:0003688">
    <property type="term" value="F:DNA replication origin binding"/>
    <property type="evidence" value="ECO:0007669"/>
    <property type="project" value="UniProtKB-UniRule"/>
</dbReference>
<dbReference type="GO" id="GO:0008289">
    <property type="term" value="F:lipid binding"/>
    <property type="evidence" value="ECO:0007669"/>
    <property type="project" value="UniProtKB-KW"/>
</dbReference>
<dbReference type="GO" id="GO:0006270">
    <property type="term" value="P:DNA replication initiation"/>
    <property type="evidence" value="ECO:0007669"/>
    <property type="project" value="UniProtKB-UniRule"/>
</dbReference>
<dbReference type="GO" id="GO:0006275">
    <property type="term" value="P:regulation of DNA replication"/>
    <property type="evidence" value="ECO:0007669"/>
    <property type="project" value="UniProtKB-UniRule"/>
</dbReference>
<dbReference type="CDD" id="cd00009">
    <property type="entry name" value="AAA"/>
    <property type="match status" value="1"/>
</dbReference>
<dbReference type="CDD" id="cd06571">
    <property type="entry name" value="Bac_DnaA_C"/>
    <property type="match status" value="1"/>
</dbReference>
<dbReference type="FunFam" id="1.10.1750.10:FF:000002">
    <property type="entry name" value="Chromosomal replication initiator protein DnaA"/>
    <property type="match status" value="1"/>
</dbReference>
<dbReference type="FunFam" id="1.10.8.60:FF:000003">
    <property type="entry name" value="Chromosomal replication initiator protein DnaA"/>
    <property type="match status" value="1"/>
</dbReference>
<dbReference type="FunFam" id="3.40.50.300:FF:000150">
    <property type="entry name" value="Chromosomal replication initiator protein DnaA"/>
    <property type="match status" value="1"/>
</dbReference>
<dbReference type="Gene3D" id="1.10.1750.10">
    <property type="match status" value="1"/>
</dbReference>
<dbReference type="Gene3D" id="1.10.8.60">
    <property type="match status" value="1"/>
</dbReference>
<dbReference type="Gene3D" id="3.40.50.300">
    <property type="entry name" value="P-loop containing nucleotide triphosphate hydrolases"/>
    <property type="match status" value="1"/>
</dbReference>
<dbReference type="HAMAP" id="MF_00377">
    <property type="entry name" value="DnaA_bact"/>
    <property type="match status" value="1"/>
</dbReference>
<dbReference type="InterPro" id="IPR003593">
    <property type="entry name" value="AAA+_ATPase"/>
</dbReference>
<dbReference type="InterPro" id="IPR001957">
    <property type="entry name" value="Chromosome_initiator_DnaA"/>
</dbReference>
<dbReference type="InterPro" id="IPR020591">
    <property type="entry name" value="Chromosome_initiator_DnaA-like"/>
</dbReference>
<dbReference type="InterPro" id="IPR018312">
    <property type="entry name" value="Chromosome_initiator_DnaA_CS"/>
</dbReference>
<dbReference type="InterPro" id="IPR013159">
    <property type="entry name" value="DnaA_C"/>
</dbReference>
<dbReference type="InterPro" id="IPR013317">
    <property type="entry name" value="DnaA_dom"/>
</dbReference>
<dbReference type="InterPro" id="IPR027417">
    <property type="entry name" value="P-loop_NTPase"/>
</dbReference>
<dbReference type="InterPro" id="IPR010921">
    <property type="entry name" value="Trp_repressor/repl_initiator"/>
</dbReference>
<dbReference type="NCBIfam" id="TIGR00362">
    <property type="entry name" value="DnaA"/>
    <property type="match status" value="1"/>
</dbReference>
<dbReference type="NCBIfam" id="NF010686">
    <property type="entry name" value="PRK14086.1"/>
    <property type="match status" value="1"/>
</dbReference>
<dbReference type="PANTHER" id="PTHR30050">
    <property type="entry name" value="CHROMOSOMAL REPLICATION INITIATOR PROTEIN DNAA"/>
    <property type="match status" value="1"/>
</dbReference>
<dbReference type="PANTHER" id="PTHR30050:SF2">
    <property type="entry name" value="CHROMOSOMAL REPLICATION INITIATOR PROTEIN DNAA"/>
    <property type="match status" value="1"/>
</dbReference>
<dbReference type="Pfam" id="PF00308">
    <property type="entry name" value="Bac_DnaA"/>
    <property type="match status" value="1"/>
</dbReference>
<dbReference type="Pfam" id="PF08299">
    <property type="entry name" value="Bac_DnaA_C"/>
    <property type="match status" value="1"/>
</dbReference>
<dbReference type="PRINTS" id="PR00051">
    <property type="entry name" value="DNAA"/>
</dbReference>
<dbReference type="SMART" id="SM00382">
    <property type="entry name" value="AAA"/>
    <property type="match status" value="1"/>
</dbReference>
<dbReference type="SMART" id="SM00760">
    <property type="entry name" value="Bac_DnaA_C"/>
    <property type="match status" value="1"/>
</dbReference>
<dbReference type="SUPFAM" id="SSF52540">
    <property type="entry name" value="P-loop containing nucleoside triphosphate hydrolases"/>
    <property type="match status" value="1"/>
</dbReference>
<dbReference type="SUPFAM" id="SSF48295">
    <property type="entry name" value="TrpR-like"/>
    <property type="match status" value="1"/>
</dbReference>
<dbReference type="PROSITE" id="PS01008">
    <property type="entry name" value="DNAA"/>
    <property type="match status" value="1"/>
</dbReference>
<accession>B0RH69</accession>